<dbReference type="EMBL" id="AF346838">
    <property type="protein sequence ID" value="AAK39510.1"/>
    <property type="molecule type" value="mRNA"/>
</dbReference>
<dbReference type="EMBL" id="AF346837">
    <property type="protein sequence ID" value="AAK39509.1"/>
    <property type="molecule type" value="mRNA"/>
</dbReference>
<dbReference type="RefSeq" id="NP_001083884.1">
    <molecule id="Q90ZS6-1"/>
    <property type="nucleotide sequence ID" value="NM_001090415.1"/>
</dbReference>
<dbReference type="DNASU" id="399173"/>
<dbReference type="GeneID" id="399173"/>
<dbReference type="KEGG" id="xla:399173"/>
<dbReference type="AGR" id="Xenbase:XB-GENE-1013668"/>
<dbReference type="CTD" id="399173"/>
<dbReference type="Xenbase" id="XB-GENE-1013668">
    <property type="gene designation" value="trps1.S"/>
</dbReference>
<dbReference type="OrthoDB" id="515401at2759"/>
<dbReference type="Proteomes" id="UP000186698">
    <property type="component" value="Chromosome 6S"/>
</dbReference>
<dbReference type="Bgee" id="399173">
    <property type="expression patterns" value="Expressed in zone of skin and 12 other cell types or tissues"/>
</dbReference>
<dbReference type="GO" id="GO:0005634">
    <property type="term" value="C:nucleus"/>
    <property type="evidence" value="ECO:0007669"/>
    <property type="project" value="UniProtKB-SubCell"/>
</dbReference>
<dbReference type="GO" id="GO:0003700">
    <property type="term" value="F:DNA-binding transcription factor activity"/>
    <property type="evidence" value="ECO:0007669"/>
    <property type="project" value="InterPro"/>
</dbReference>
<dbReference type="GO" id="GO:0000977">
    <property type="term" value="F:RNA polymerase II transcription regulatory region sequence-specific DNA binding"/>
    <property type="evidence" value="ECO:0000318"/>
    <property type="project" value="GO_Central"/>
</dbReference>
<dbReference type="GO" id="GO:0008270">
    <property type="term" value="F:zinc ion binding"/>
    <property type="evidence" value="ECO:0007669"/>
    <property type="project" value="UniProtKB-KW"/>
</dbReference>
<dbReference type="GO" id="GO:0006357">
    <property type="term" value="P:regulation of transcription by RNA polymerase II"/>
    <property type="evidence" value="ECO:0000318"/>
    <property type="project" value="GO_Central"/>
</dbReference>
<dbReference type="CDD" id="cd00202">
    <property type="entry name" value="ZnF_GATA"/>
    <property type="match status" value="1"/>
</dbReference>
<dbReference type="FunFam" id="3.30.50.10:FF:000020">
    <property type="entry name" value="Zinc finger transcription factor Trps1"/>
    <property type="match status" value="1"/>
</dbReference>
<dbReference type="Gene3D" id="3.30.160.60">
    <property type="entry name" value="Classic Zinc Finger"/>
    <property type="match status" value="2"/>
</dbReference>
<dbReference type="Gene3D" id="3.30.50.10">
    <property type="entry name" value="Erythroid Transcription Factor GATA-1, subunit A"/>
    <property type="match status" value="1"/>
</dbReference>
<dbReference type="InterPro" id="IPR028440">
    <property type="entry name" value="TRPS1"/>
</dbReference>
<dbReference type="InterPro" id="IPR036236">
    <property type="entry name" value="Znf_C2H2_sf"/>
</dbReference>
<dbReference type="InterPro" id="IPR013087">
    <property type="entry name" value="Znf_C2H2_type"/>
</dbReference>
<dbReference type="InterPro" id="IPR000679">
    <property type="entry name" value="Znf_GATA"/>
</dbReference>
<dbReference type="InterPro" id="IPR013088">
    <property type="entry name" value="Znf_NHR/GATA"/>
</dbReference>
<dbReference type="PANTHER" id="PTHR47034">
    <property type="entry name" value="ZINC FINGER TRANSCRIPTION FACTOR TRPS1"/>
    <property type="match status" value="1"/>
</dbReference>
<dbReference type="PANTHER" id="PTHR47034:SF1">
    <property type="entry name" value="ZINC FINGER TRANSCRIPTION FACTOR TRPS1"/>
    <property type="match status" value="1"/>
</dbReference>
<dbReference type="Pfam" id="PF00320">
    <property type="entry name" value="GATA"/>
    <property type="match status" value="1"/>
</dbReference>
<dbReference type="PRINTS" id="PR00619">
    <property type="entry name" value="GATAZNFINGER"/>
</dbReference>
<dbReference type="SMART" id="SM00355">
    <property type="entry name" value="ZnF_C2H2"/>
    <property type="match status" value="9"/>
</dbReference>
<dbReference type="SMART" id="SM00401">
    <property type="entry name" value="ZnF_GATA"/>
    <property type="match status" value="1"/>
</dbReference>
<dbReference type="SUPFAM" id="SSF57667">
    <property type="entry name" value="beta-beta-alpha zinc fingers"/>
    <property type="match status" value="1"/>
</dbReference>
<dbReference type="SUPFAM" id="SSF57716">
    <property type="entry name" value="Glucocorticoid receptor-like (DNA-binding domain)"/>
    <property type="match status" value="1"/>
</dbReference>
<dbReference type="PROSITE" id="PS00344">
    <property type="entry name" value="GATA_ZN_FINGER_1"/>
    <property type="match status" value="1"/>
</dbReference>
<dbReference type="PROSITE" id="PS50114">
    <property type="entry name" value="GATA_ZN_FINGER_2"/>
    <property type="match status" value="1"/>
</dbReference>
<dbReference type="PROSITE" id="PS00028">
    <property type="entry name" value="ZINC_FINGER_C2H2_1"/>
    <property type="match status" value="3"/>
</dbReference>
<reference key="1">
    <citation type="journal article" date="2001" name="EMBO J.">
        <title>Transcriptional repression and developmental functions of the atypical vertebrate GATA protein TRPS1.</title>
        <authorList>
            <person name="Malik T.H."/>
            <person name="Shoichet S.A."/>
            <person name="Latham P."/>
            <person name="Kroll T.G."/>
            <person name="Peters L.L."/>
            <person name="Shivdasani R.A."/>
        </authorList>
    </citation>
    <scope>NUCLEOTIDE SEQUENCE [MRNA] (ISOFORMS XTRPS1 AND MTRPS1)</scope>
    <scope>FUNCTION</scope>
    <scope>REPRESSOR DOMAIN</scope>
    <scope>MUTAGENESIS OF 886-CYS--CYS-889</scope>
</reference>
<proteinExistence type="evidence at protein level"/>
<organism>
    <name type="scientific">Xenopus laevis</name>
    <name type="common">African clawed frog</name>
    <dbReference type="NCBI Taxonomy" id="8355"/>
    <lineage>
        <taxon>Eukaryota</taxon>
        <taxon>Metazoa</taxon>
        <taxon>Chordata</taxon>
        <taxon>Craniata</taxon>
        <taxon>Vertebrata</taxon>
        <taxon>Euteleostomi</taxon>
        <taxon>Amphibia</taxon>
        <taxon>Batrachia</taxon>
        <taxon>Anura</taxon>
        <taxon>Pipoidea</taxon>
        <taxon>Pipidae</taxon>
        <taxon>Xenopodinae</taxon>
        <taxon>Xenopus</taxon>
        <taxon>Xenopus</taxon>
    </lineage>
</organism>
<feature type="chain" id="PRO_0000083510" description="Zinc finger transcription factor Trps1">
    <location>
        <begin position="1"/>
        <end position="1271"/>
    </location>
</feature>
<feature type="zinc finger region" description="C2H2-type 1; atypical">
    <location>
        <begin position="217"/>
        <end position="242"/>
    </location>
</feature>
<feature type="zinc finger region" description="C2H2-type 2; atypical">
    <location>
        <begin position="328"/>
        <end position="353"/>
    </location>
</feature>
<feature type="zinc finger region" description="C2H2-type 3; atypical">
    <location>
        <begin position="426"/>
        <end position="451"/>
    </location>
</feature>
<feature type="zinc finger region" description="C2H2-type 4; atypical">
    <location>
        <begin position="513"/>
        <end position="543"/>
    </location>
</feature>
<feature type="zinc finger region" description="C2H2-type 5">
    <location>
        <begin position="604"/>
        <end position="627"/>
    </location>
</feature>
<feature type="zinc finger region" description="C2H2-type 6">
    <location>
        <begin position="656"/>
        <end position="679"/>
    </location>
</feature>
<feature type="zinc finger region" description="C2H2-type 7">
    <location>
        <begin position="682"/>
        <end position="705"/>
    </location>
</feature>
<feature type="zinc finger region" description="GATA-type" evidence="2">
    <location>
        <begin position="886"/>
        <end position="910"/>
    </location>
</feature>
<feature type="zinc finger region" description="C2H2-type 8">
    <location>
        <begin position="1205"/>
        <end position="1227"/>
    </location>
</feature>
<feature type="zinc finger region" description="C2H2-type 9">
    <location>
        <begin position="1233"/>
        <end position="1257"/>
    </location>
</feature>
<feature type="region of interest" description="Disordered" evidence="3">
    <location>
        <begin position="1"/>
        <end position="76"/>
    </location>
</feature>
<feature type="region of interest" description="Disordered" evidence="3">
    <location>
        <begin position="124"/>
        <end position="155"/>
    </location>
</feature>
<feature type="region of interest" description="Disordered" evidence="3">
    <location>
        <begin position="353"/>
        <end position="387"/>
    </location>
</feature>
<feature type="region of interest" description="Disordered" evidence="3">
    <location>
        <begin position="843"/>
        <end position="877"/>
    </location>
</feature>
<feature type="region of interest" description="Disordered" evidence="3">
    <location>
        <begin position="938"/>
        <end position="987"/>
    </location>
</feature>
<feature type="region of interest" description="Disordered" evidence="3">
    <location>
        <begin position="1031"/>
        <end position="1064"/>
    </location>
</feature>
<feature type="region of interest" description="Transcriptional repressor domain">
    <location>
        <begin position="1153"/>
        <end position="1271"/>
    </location>
</feature>
<feature type="region of interest" description="Disordered" evidence="3">
    <location>
        <begin position="1154"/>
        <end position="1196"/>
    </location>
</feature>
<feature type="compositionally biased region" description="Polar residues" evidence="3">
    <location>
        <begin position="34"/>
        <end position="49"/>
    </location>
</feature>
<feature type="compositionally biased region" description="Basic and acidic residues" evidence="3">
    <location>
        <begin position="54"/>
        <end position="65"/>
    </location>
</feature>
<feature type="compositionally biased region" description="Polar residues" evidence="3">
    <location>
        <begin position="66"/>
        <end position="76"/>
    </location>
</feature>
<feature type="compositionally biased region" description="Basic and acidic residues" evidence="3">
    <location>
        <begin position="972"/>
        <end position="985"/>
    </location>
</feature>
<feature type="compositionally biased region" description="Low complexity" evidence="3">
    <location>
        <begin position="1031"/>
        <end position="1049"/>
    </location>
</feature>
<feature type="compositionally biased region" description="Basic and acidic residues" evidence="3">
    <location>
        <begin position="1050"/>
        <end position="1062"/>
    </location>
</feature>
<feature type="compositionally biased region" description="Basic and acidic residues" evidence="3">
    <location>
        <begin position="1170"/>
        <end position="1196"/>
    </location>
</feature>
<feature type="cross-link" description="Glycyl lysine isopeptide (Lys-Gly) (interchain with G-Cter in SUMO)" evidence="1">
    <location>
        <position position="1182"/>
    </location>
</feature>
<feature type="cross-link" description="Glycyl lysine isopeptide (Lys-Gly) (interchain with G-Cter in SUMO)" evidence="1">
    <location>
        <position position="1191"/>
    </location>
</feature>
<feature type="splice variant" id="VSP_001607" description="In isoform mTRPS1." evidence="5">
    <location>
        <begin position="364"/>
        <end position="616"/>
    </location>
</feature>
<feature type="mutagenesis site" description="Abolishes transcriptional repressive activity towards GATA." evidence="4">
    <original>CANC</original>
    <variation>GANA</variation>
    <location>
        <begin position="886"/>
        <end position="889"/>
    </location>
</feature>
<feature type="sequence conflict" description="In Ref. 1; AAK39509." evidence="6" ref="1">
    <original>A</original>
    <variation>S</variation>
    <location>
        <position position="848"/>
    </location>
</feature>
<feature type="sequence conflict" description="In Ref. 1; AAK39509." evidence="6" ref="1">
    <original>K</original>
    <variation>R</variation>
    <location>
        <position position="852"/>
    </location>
</feature>
<accession>Q90ZS6</accession>
<accession>Q90ZS7</accession>
<gene>
    <name type="primary">trps1</name>
</gene>
<keyword id="KW-0025">Alternative splicing</keyword>
<keyword id="KW-0238">DNA-binding</keyword>
<keyword id="KW-1017">Isopeptide bond</keyword>
<keyword id="KW-0479">Metal-binding</keyword>
<keyword id="KW-0539">Nucleus</keyword>
<keyword id="KW-1185">Reference proteome</keyword>
<keyword id="KW-0677">Repeat</keyword>
<keyword id="KW-0678">Repressor</keyword>
<keyword id="KW-0804">Transcription</keyword>
<keyword id="KW-0805">Transcription regulation</keyword>
<keyword id="KW-0832">Ubl conjugation</keyword>
<keyword id="KW-0862">Zinc</keyword>
<keyword id="KW-0863">Zinc-finger</keyword>
<protein>
    <recommendedName>
        <fullName>Zinc finger transcription factor Trps1</fullName>
    </recommendedName>
</protein>
<comment type="function">
    <text evidence="4">Transcriptional repressor. Represses expression of GATA-regulated genes at selected sites and stages in vertebrate development.</text>
</comment>
<comment type="subunit">
    <text>Binds specifically to GATA sequences.</text>
</comment>
<comment type="subcellular location">
    <subcellularLocation>
        <location>Nucleus</location>
    </subcellularLocation>
</comment>
<comment type="alternative products">
    <event type="alternative splicing"/>
    <isoform>
        <id>Q90ZS6-1</id>
        <name>xTRPS1</name>
        <name>Zygotic</name>
        <sequence type="displayed"/>
    </isoform>
    <isoform>
        <id>Q90ZS6-2</id>
        <name>mTRPS1</name>
        <name>Maternal</name>
        <sequence type="described" ref="VSP_001607"/>
    </isoform>
</comment>
<comment type="PTM">
    <text evidence="1">Sumoylated. Sumoylation in the repressor domain inhibits the transcription repression activity. Sumoylation on Lys-1191 is the major site. Appears to be sumoylated on multiple sites (By similarity).</text>
</comment>
<name>TRPS1_XENLA</name>
<evidence type="ECO:0000250" key="1"/>
<evidence type="ECO:0000255" key="2">
    <source>
        <dbReference type="PROSITE-ProRule" id="PRU00094"/>
    </source>
</evidence>
<evidence type="ECO:0000256" key="3">
    <source>
        <dbReference type="SAM" id="MobiDB-lite"/>
    </source>
</evidence>
<evidence type="ECO:0000269" key="4">
    <source>
    </source>
</evidence>
<evidence type="ECO:0000303" key="5">
    <source>
    </source>
</evidence>
<evidence type="ECO:0000305" key="6"/>
<sequence>MVRKKNPPLRNIASEGEAQITESAASKREDTISSKEISTDPMQENSEQSGLVEHNSDDHSFHDQEPSSSINKDSASLSLSERAVVNYSHLKGRNVYFSPMEVTDRNMLALVTTDTRSACDPLKSPIKSEADDTQELASSASVDSLEAKEENDMSPRATDFTVQCGKVDCQSSSPASVASDNLHVPSDGIAGLNKSQAVLLVNDNSDSAPLSPELQDFKCNICGYGYYGNDPTDLIKHFRKYHLGLHNRTRQDVELDTKILALHNMVQFSQSKDFQKMNRSVLSGVLQDFNSPRPVLLNGTYDVQVTFGETFIGIGRKTPDCQGNTKYFRCKFCNFTYLAKSATELEQHFLKTHPNKMKMSSDSGKPSEKSTNKSSPIPRSCEPGDLGKWQDKITVKAADDIPVGYSVPIKPVDSCRQNGTDDTNYYWCKFCSFSCESSSNSKLLEHHSKQHGGGKSESPNSDLNDEIFRGSVINQNEITKSSDEQLPTKIDKGLAKKKDVSSVPTEDIIVTNYNCQFCDFRYSKSHGPEVILVGPLLRHYQQHHNIHKCTIKHCPFCPRGLCTPEKHLGEITYPFACKKSNCSHCALLLLHLSSGGTESTRVKHQCDQCSFSSPDVDVLLLHYENAHEAQACEIKQELNHQHGADGQPSIKEIKEHSCTKCDFIVQVEEDLPRHYRRVHNCYKCRQCNFTAADTQSLLDHFNSAHCQEFEITTSNGGEHHGTSSIKEEPKTDLKVYNLVTPDSKMGEAIFDSTVKKEKLEDKETLREKAWSDGSVDDLRGVAWRAPDILRTSPSYSQMGLGLLTTVSVNQDQQKSSRDSPNVEAAHLARPVYGLSIEPKGFQGVTAGASGEKSGQHTPQYPTAGDSKSKDESQSLLRRRRGSGVFCANCLTTKTSLWRKNANGGYVCNACGLYQKLHSTPRPLNIIKQNNGEQIIRRRTRKRLNPEALQPEQLTKHQRASSEEQANGSPLDIRSEDHSMEGHQRENQQLSMNKYGSQASLTKSHSAQQTMIVSQTMDIHKRMQPLHIQIKSPQESSGEPGNSSSVSDGKGSSERGSPIEKYMRPIKHPNYSPPGSPIEKYQYPLFGLPFVHNDFQSEADWLRFWSKYKLSVPGNPHYLSHVPGLPNPCPNYVPYPTFNLPAQYSSVGSDNDIPLDLAMKHSRPGSGTNGDSKEKSKSPVSVKDDGPLNVTKIEKSDKSTQDELSTKCVHCGIVFLDEVMYALHMSCHGESGPFQCSICQHLCTDKYDFTTHIQRGLHRNIAQAEKNGKNKD</sequence>